<reference key="1">
    <citation type="journal article" date="2005" name="BMC Genomics">
        <title>Bacterial genome adaptation to niches: divergence of the potential virulence genes in three Burkholderia species of different survival strategies.</title>
        <authorList>
            <person name="Kim H.S."/>
            <person name="Schell M.A."/>
            <person name="Yu Y."/>
            <person name="Ulrich R.L."/>
            <person name="Sarria S.H."/>
            <person name="Nierman W.C."/>
            <person name="DeShazer D."/>
        </authorList>
    </citation>
    <scope>NUCLEOTIDE SEQUENCE [LARGE SCALE GENOMIC DNA]</scope>
    <source>
        <strain>ATCC 700388 / DSM 13276 / CCUG 48851 / CIP 106301 / E264</strain>
    </source>
</reference>
<gene>
    <name evidence="1" type="primary">hisF</name>
    <name type="ordered locus">BTH_I2987</name>
</gene>
<accession>Q2SUA8</accession>
<keyword id="KW-0028">Amino-acid biosynthesis</keyword>
<keyword id="KW-0963">Cytoplasm</keyword>
<keyword id="KW-0368">Histidine biosynthesis</keyword>
<keyword id="KW-0456">Lyase</keyword>
<dbReference type="EC" id="4.3.2.10" evidence="1"/>
<dbReference type="EMBL" id="CP000086">
    <property type="protein sequence ID" value="ABC36594.1"/>
    <property type="status" value="ALT_INIT"/>
    <property type="molecule type" value="Genomic_DNA"/>
</dbReference>
<dbReference type="RefSeq" id="WP_009888537.1">
    <property type="nucleotide sequence ID" value="NZ_CP008786.1"/>
</dbReference>
<dbReference type="SMR" id="Q2SUA8"/>
<dbReference type="GeneID" id="45122675"/>
<dbReference type="KEGG" id="bte:BTH_I2987"/>
<dbReference type="HOGENOM" id="CLU_048577_4_0_4"/>
<dbReference type="UniPathway" id="UPA00031">
    <property type="reaction ID" value="UER00010"/>
</dbReference>
<dbReference type="Proteomes" id="UP000001930">
    <property type="component" value="Chromosome I"/>
</dbReference>
<dbReference type="GO" id="GO:0005737">
    <property type="term" value="C:cytoplasm"/>
    <property type="evidence" value="ECO:0007669"/>
    <property type="project" value="UniProtKB-SubCell"/>
</dbReference>
<dbReference type="GO" id="GO:0000107">
    <property type="term" value="F:imidazoleglycerol-phosphate synthase activity"/>
    <property type="evidence" value="ECO:0007669"/>
    <property type="project" value="UniProtKB-UniRule"/>
</dbReference>
<dbReference type="GO" id="GO:0016829">
    <property type="term" value="F:lyase activity"/>
    <property type="evidence" value="ECO:0007669"/>
    <property type="project" value="UniProtKB-KW"/>
</dbReference>
<dbReference type="GO" id="GO:0000105">
    <property type="term" value="P:L-histidine biosynthetic process"/>
    <property type="evidence" value="ECO:0007669"/>
    <property type="project" value="UniProtKB-UniRule"/>
</dbReference>
<dbReference type="CDD" id="cd04731">
    <property type="entry name" value="HisF"/>
    <property type="match status" value="1"/>
</dbReference>
<dbReference type="FunFam" id="3.20.20.70:FF:000006">
    <property type="entry name" value="Imidazole glycerol phosphate synthase subunit HisF"/>
    <property type="match status" value="1"/>
</dbReference>
<dbReference type="Gene3D" id="3.20.20.70">
    <property type="entry name" value="Aldolase class I"/>
    <property type="match status" value="1"/>
</dbReference>
<dbReference type="HAMAP" id="MF_01013">
    <property type="entry name" value="HisF"/>
    <property type="match status" value="1"/>
</dbReference>
<dbReference type="InterPro" id="IPR013785">
    <property type="entry name" value="Aldolase_TIM"/>
</dbReference>
<dbReference type="InterPro" id="IPR006062">
    <property type="entry name" value="His_biosynth"/>
</dbReference>
<dbReference type="InterPro" id="IPR004651">
    <property type="entry name" value="HisF"/>
</dbReference>
<dbReference type="InterPro" id="IPR050064">
    <property type="entry name" value="IGPS_HisA/HisF"/>
</dbReference>
<dbReference type="InterPro" id="IPR011060">
    <property type="entry name" value="RibuloseP-bd_barrel"/>
</dbReference>
<dbReference type="NCBIfam" id="TIGR00735">
    <property type="entry name" value="hisF"/>
    <property type="match status" value="1"/>
</dbReference>
<dbReference type="PANTHER" id="PTHR21235:SF2">
    <property type="entry name" value="IMIDAZOLE GLYCEROL PHOSPHATE SYNTHASE HISHF"/>
    <property type="match status" value="1"/>
</dbReference>
<dbReference type="PANTHER" id="PTHR21235">
    <property type="entry name" value="IMIDAZOLE GLYCEROL PHOSPHATE SYNTHASE SUBUNIT HISF/H IGP SYNTHASE SUBUNIT HISF/H"/>
    <property type="match status" value="1"/>
</dbReference>
<dbReference type="Pfam" id="PF00977">
    <property type="entry name" value="His_biosynth"/>
    <property type="match status" value="1"/>
</dbReference>
<dbReference type="SUPFAM" id="SSF51366">
    <property type="entry name" value="Ribulose-phoshate binding barrel"/>
    <property type="match status" value="1"/>
</dbReference>
<name>HIS6_BURTA</name>
<proteinExistence type="inferred from homology"/>
<protein>
    <recommendedName>
        <fullName evidence="1">Imidazole glycerol phosphate synthase subunit HisF</fullName>
        <ecNumber evidence="1">4.3.2.10</ecNumber>
    </recommendedName>
    <alternativeName>
        <fullName evidence="1">IGP synthase cyclase subunit</fullName>
    </alternativeName>
    <alternativeName>
        <fullName evidence="1">IGP synthase subunit HisF</fullName>
    </alternativeName>
    <alternativeName>
        <fullName evidence="1">ImGP synthase subunit HisF</fullName>
        <shortName evidence="1">IGPS subunit HisF</shortName>
    </alternativeName>
</protein>
<organism>
    <name type="scientific">Burkholderia thailandensis (strain ATCC 700388 / DSM 13276 / CCUG 48851 / CIP 106301 / E264)</name>
    <dbReference type="NCBI Taxonomy" id="271848"/>
    <lineage>
        <taxon>Bacteria</taxon>
        <taxon>Pseudomonadati</taxon>
        <taxon>Pseudomonadota</taxon>
        <taxon>Betaproteobacteria</taxon>
        <taxon>Burkholderiales</taxon>
        <taxon>Burkholderiaceae</taxon>
        <taxon>Burkholderia</taxon>
        <taxon>pseudomallei group</taxon>
    </lineage>
</organism>
<comment type="function">
    <text evidence="1">IGPS catalyzes the conversion of PRFAR and glutamine to IGP, AICAR and glutamate. The HisF subunit catalyzes the cyclization activity that produces IGP and AICAR from PRFAR using the ammonia provided by the HisH subunit.</text>
</comment>
<comment type="catalytic activity">
    <reaction evidence="1">
        <text>5-[(5-phospho-1-deoxy-D-ribulos-1-ylimino)methylamino]-1-(5-phospho-beta-D-ribosyl)imidazole-4-carboxamide + L-glutamine = D-erythro-1-(imidazol-4-yl)glycerol 3-phosphate + 5-amino-1-(5-phospho-beta-D-ribosyl)imidazole-4-carboxamide + L-glutamate + H(+)</text>
        <dbReference type="Rhea" id="RHEA:24793"/>
        <dbReference type="ChEBI" id="CHEBI:15378"/>
        <dbReference type="ChEBI" id="CHEBI:29985"/>
        <dbReference type="ChEBI" id="CHEBI:58278"/>
        <dbReference type="ChEBI" id="CHEBI:58359"/>
        <dbReference type="ChEBI" id="CHEBI:58475"/>
        <dbReference type="ChEBI" id="CHEBI:58525"/>
        <dbReference type="EC" id="4.3.2.10"/>
    </reaction>
</comment>
<comment type="pathway">
    <text evidence="1">Amino-acid biosynthesis; L-histidine biosynthesis; L-histidine from 5-phospho-alpha-D-ribose 1-diphosphate: step 5/9.</text>
</comment>
<comment type="subunit">
    <text evidence="1">Heterodimer of HisH and HisF.</text>
</comment>
<comment type="subcellular location">
    <subcellularLocation>
        <location evidence="1">Cytoplasm</location>
    </subcellularLocation>
</comment>
<comment type="similarity">
    <text evidence="1">Belongs to the HisA/HisF family.</text>
</comment>
<comment type="sequence caution" evidence="2">
    <conflict type="erroneous initiation">
        <sequence resource="EMBL-CDS" id="ABC36594"/>
    </conflict>
</comment>
<sequence>MALAKRIIPCLDVTAGRVVKGVNFVELRDAGDPVEIARRYDDQGADELTFLDITATSDGRDLILPIIEAVASQVFIPLTVGGGVRAVEDVRRLLNAGADKVSMNSSAVANPQLVRDAADKYGSQCIVVAIDAKRVSAEGEPPRWEVFTHGGRKGTGLDAVEWARKMAEFGAGEILLTSMDRDGTKAGFDLALTRAVSDAVPVPVIASGGVGSLEHLAAGITEGHADAVLAASIFHYGEHTVGEAKRYMAERGIAVRL</sequence>
<evidence type="ECO:0000255" key="1">
    <source>
        <dbReference type="HAMAP-Rule" id="MF_01013"/>
    </source>
</evidence>
<evidence type="ECO:0000305" key="2"/>
<feature type="chain" id="PRO_0000319454" description="Imidazole glycerol phosphate synthase subunit HisF">
    <location>
        <begin position="1"/>
        <end position="257"/>
    </location>
</feature>
<feature type="active site" evidence="1">
    <location>
        <position position="12"/>
    </location>
</feature>
<feature type="active site" evidence="1">
    <location>
        <position position="131"/>
    </location>
</feature>